<organism>
    <name type="scientific">Listeria innocua serovar 6a (strain ATCC BAA-680 / CLIP 11262)</name>
    <dbReference type="NCBI Taxonomy" id="272626"/>
    <lineage>
        <taxon>Bacteria</taxon>
        <taxon>Bacillati</taxon>
        <taxon>Bacillota</taxon>
        <taxon>Bacilli</taxon>
        <taxon>Bacillales</taxon>
        <taxon>Listeriaceae</taxon>
        <taxon>Listeria</taxon>
    </lineage>
</organism>
<keyword id="KW-0548">Nucleotidyltransferase</keyword>
<keyword id="KW-0694">RNA-binding</keyword>
<keyword id="KW-0698">rRNA processing</keyword>
<keyword id="KW-0808">Transferase</keyword>
<keyword id="KW-0819">tRNA processing</keyword>
<keyword id="KW-0820">tRNA-binding</keyword>
<evidence type="ECO:0000255" key="1">
    <source>
        <dbReference type="HAMAP-Rule" id="MF_00564"/>
    </source>
</evidence>
<gene>
    <name evidence="1" type="primary">rph</name>
    <name type="ordered locus">lin1201</name>
</gene>
<accession>Q92CH1</accession>
<sequence>MRFDGREKNALREIEVTPDYLMHPEGSVLIASGNTKVICSASVETKVPPFMRGEGRGWISAEYSMLPRATNTRNIRESSKGKVTGRTMEIQRLIGRALRAVVDLDALGERTIWLDCDVIQADGGTRTASITGAFIAMVMAIAKLDEEVPFTKFPVKDFLAATSVGVLEEGGTVLDLNYVEDSAAQVDMNIIMTGSGAFVELQGTGEEATFSETELAELIALGKKGISELIEIQKETLGDKITARIKGE</sequence>
<feature type="chain" id="PRO_0000139904" description="Ribonuclease PH">
    <location>
        <begin position="1"/>
        <end position="248"/>
    </location>
</feature>
<feature type="binding site" evidence="1">
    <location>
        <position position="86"/>
    </location>
    <ligand>
        <name>phosphate</name>
        <dbReference type="ChEBI" id="CHEBI:43474"/>
        <note>substrate</note>
    </ligand>
</feature>
<feature type="binding site" evidence="1">
    <location>
        <begin position="124"/>
        <end position="126"/>
    </location>
    <ligand>
        <name>phosphate</name>
        <dbReference type="ChEBI" id="CHEBI:43474"/>
        <note>substrate</note>
    </ligand>
</feature>
<reference key="1">
    <citation type="journal article" date="2001" name="Science">
        <title>Comparative genomics of Listeria species.</title>
        <authorList>
            <person name="Glaser P."/>
            <person name="Frangeul L."/>
            <person name="Buchrieser C."/>
            <person name="Rusniok C."/>
            <person name="Amend A."/>
            <person name="Baquero F."/>
            <person name="Berche P."/>
            <person name="Bloecker H."/>
            <person name="Brandt P."/>
            <person name="Chakraborty T."/>
            <person name="Charbit A."/>
            <person name="Chetouani F."/>
            <person name="Couve E."/>
            <person name="de Daruvar A."/>
            <person name="Dehoux P."/>
            <person name="Domann E."/>
            <person name="Dominguez-Bernal G."/>
            <person name="Duchaud E."/>
            <person name="Durant L."/>
            <person name="Dussurget O."/>
            <person name="Entian K.-D."/>
            <person name="Fsihi H."/>
            <person name="Garcia-del Portillo F."/>
            <person name="Garrido P."/>
            <person name="Gautier L."/>
            <person name="Goebel W."/>
            <person name="Gomez-Lopez N."/>
            <person name="Hain T."/>
            <person name="Hauf J."/>
            <person name="Jackson D."/>
            <person name="Jones L.-M."/>
            <person name="Kaerst U."/>
            <person name="Kreft J."/>
            <person name="Kuhn M."/>
            <person name="Kunst F."/>
            <person name="Kurapkat G."/>
            <person name="Madueno E."/>
            <person name="Maitournam A."/>
            <person name="Mata Vicente J."/>
            <person name="Ng E."/>
            <person name="Nedjari H."/>
            <person name="Nordsiek G."/>
            <person name="Novella S."/>
            <person name="de Pablos B."/>
            <person name="Perez-Diaz J.-C."/>
            <person name="Purcell R."/>
            <person name="Remmel B."/>
            <person name="Rose M."/>
            <person name="Schlueter T."/>
            <person name="Simoes N."/>
            <person name="Tierrez A."/>
            <person name="Vazquez-Boland J.-A."/>
            <person name="Voss H."/>
            <person name="Wehland J."/>
            <person name="Cossart P."/>
        </authorList>
    </citation>
    <scope>NUCLEOTIDE SEQUENCE [LARGE SCALE GENOMIC DNA]</scope>
    <source>
        <strain>ATCC BAA-680 / CLIP 11262</strain>
    </source>
</reference>
<dbReference type="EC" id="2.7.7.56" evidence="1"/>
<dbReference type="EMBL" id="AL596167">
    <property type="protein sequence ID" value="CAC96432.1"/>
    <property type="molecule type" value="Genomic_DNA"/>
</dbReference>
<dbReference type="PIR" id="AH1582">
    <property type="entry name" value="AH1582"/>
</dbReference>
<dbReference type="RefSeq" id="WP_010990824.1">
    <property type="nucleotide sequence ID" value="NC_003212.1"/>
</dbReference>
<dbReference type="SMR" id="Q92CH1"/>
<dbReference type="STRING" id="272626.gene:17565531"/>
<dbReference type="KEGG" id="lin:lin1201"/>
<dbReference type="eggNOG" id="COG0689">
    <property type="taxonomic scope" value="Bacteria"/>
</dbReference>
<dbReference type="HOGENOM" id="CLU_050858_0_0_9"/>
<dbReference type="OrthoDB" id="9802265at2"/>
<dbReference type="Proteomes" id="UP000002513">
    <property type="component" value="Chromosome"/>
</dbReference>
<dbReference type="GO" id="GO:0000175">
    <property type="term" value="F:3'-5'-RNA exonuclease activity"/>
    <property type="evidence" value="ECO:0007669"/>
    <property type="project" value="UniProtKB-UniRule"/>
</dbReference>
<dbReference type="GO" id="GO:0000049">
    <property type="term" value="F:tRNA binding"/>
    <property type="evidence" value="ECO:0007669"/>
    <property type="project" value="UniProtKB-UniRule"/>
</dbReference>
<dbReference type="GO" id="GO:0009022">
    <property type="term" value="F:tRNA nucleotidyltransferase activity"/>
    <property type="evidence" value="ECO:0007669"/>
    <property type="project" value="UniProtKB-UniRule"/>
</dbReference>
<dbReference type="GO" id="GO:0016075">
    <property type="term" value="P:rRNA catabolic process"/>
    <property type="evidence" value="ECO:0007669"/>
    <property type="project" value="UniProtKB-UniRule"/>
</dbReference>
<dbReference type="GO" id="GO:0006364">
    <property type="term" value="P:rRNA processing"/>
    <property type="evidence" value="ECO:0007669"/>
    <property type="project" value="UniProtKB-KW"/>
</dbReference>
<dbReference type="GO" id="GO:0008033">
    <property type="term" value="P:tRNA processing"/>
    <property type="evidence" value="ECO:0007669"/>
    <property type="project" value="UniProtKB-UniRule"/>
</dbReference>
<dbReference type="CDD" id="cd11362">
    <property type="entry name" value="RNase_PH_bact"/>
    <property type="match status" value="1"/>
</dbReference>
<dbReference type="FunFam" id="3.30.230.70:FF:000003">
    <property type="entry name" value="Ribonuclease PH"/>
    <property type="match status" value="1"/>
</dbReference>
<dbReference type="Gene3D" id="3.30.230.70">
    <property type="entry name" value="GHMP Kinase, N-terminal domain"/>
    <property type="match status" value="1"/>
</dbReference>
<dbReference type="HAMAP" id="MF_00564">
    <property type="entry name" value="RNase_PH"/>
    <property type="match status" value="1"/>
</dbReference>
<dbReference type="InterPro" id="IPR001247">
    <property type="entry name" value="ExoRNase_PH_dom1"/>
</dbReference>
<dbReference type="InterPro" id="IPR015847">
    <property type="entry name" value="ExoRNase_PH_dom2"/>
</dbReference>
<dbReference type="InterPro" id="IPR036345">
    <property type="entry name" value="ExoRNase_PH_dom2_sf"/>
</dbReference>
<dbReference type="InterPro" id="IPR027408">
    <property type="entry name" value="PNPase/RNase_PH_dom_sf"/>
</dbReference>
<dbReference type="InterPro" id="IPR020568">
    <property type="entry name" value="Ribosomal_Su5_D2-typ_SF"/>
</dbReference>
<dbReference type="InterPro" id="IPR050080">
    <property type="entry name" value="RNase_PH"/>
</dbReference>
<dbReference type="InterPro" id="IPR002381">
    <property type="entry name" value="RNase_PH_bac-type"/>
</dbReference>
<dbReference type="InterPro" id="IPR018336">
    <property type="entry name" value="RNase_PH_CS"/>
</dbReference>
<dbReference type="NCBIfam" id="TIGR01966">
    <property type="entry name" value="RNasePH"/>
    <property type="match status" value="1"/>
</dbReference>
<dbReference type="PANTHER" id="PTHR11953">
    <property type="entry name" value="EXOSOME COMPLEX COMPONENT"/>
    <property type="match status" value="1"/>
</dbReference>
<dbReference type="PANTHER" id="PTHR11953:SF0">
    <property type="entry name" value="EXOSOME COMPLEX COMPONENT RRP41"/>
    <property type="match status" value="1"/>
</dbReference>
<dbReference type="Pfam" id="PF01138">
    <property type="entry name" value="RNase_PH"/>
    <property type="match status" value="1"/>
</dbReference>
<dbReference type="Pfam" id="PF03725">
    <property type="entry name" value="RNase_PH_C"/>
    <property type="match status" value="1"/>
</dbReference>
<dbReference type="SUPFAM" id="SSF55666">
    <property type="entry name" value="Ribonuclease PH domain 2-like"/>
    <property type="match status" value="1"/>
</dbReference>
<dbReference type="SUPFAM" id="SSF54211">
    <property type="entry name" value="Ribosomal protein S5 domain 2-like"/>
    <property type="match status" value="1"/>
</dbReference>
<dbReference type="PROSITE" id="PS01277">
    <property type="entry name" value="RIBONUCLEASE_PH"/>
    <property type="match status" value="1"/>
</dbReference>
<proteinExistence type="inferred from homology"/>
<name>RNPH_LISIN</name>
<protein>
    <recommendedName>
        <fullName evidence="1">Ribonuclease PH</fullName>
        <shortName evidence="1">RNase PH</shortName>
        <ecNumber evidence="1">2.7.7.56</ecNumber>
    </recommendedName>
    <alternativeName>
        <fullName evidence="1">tRNA nucleotidyltransferase</fullName>
    </alternativeName>
</protein>
<comment type="function">
    <text evidence="1">Phosphorolytic 3'-5' exoribonuclease that plays an important role in tRNA 3'-end maturation. Removes nucleotide residues following the 3'-CCA terminus of tRNAs; can also add nucleotides to the ends of RNA molecules by using nucleoside diphosphates as substrates, but this may not be physiologically important. Probably plays a role in initiation of 16S rRNA degradation (leading to ribosome degradation) during starvation.</text>
</comment>
<comment type="catalytic activity">
    <reaction evidence="1">
        <text>tRNA(n+1) + phosphate = tRNA(n) + a ribonucleoside 5'-diphosphate</text>
        <dbReference type="Rhea" id="RHEA:10628"/>
        <dbReference type="Rhea" id="RHEA-COMP:17343"/>
        <dbReference type="Rhea" id="RHEA-COMP:17344"/>
        <dbReference type="ChEBI" id="CHEBI:43474"/>
        <dbReference type="ChEBI" id="CHEBI:57930"/>
        <dbReference type="ChEBI" id="CHEBI:173114"/>
        <dbReference type="EC" id="2.7.7.56"/>
    </reaction>
</comment>
<comment type="subunit">
    <text evidence="1">Homohexameric ring arranged as a trimer of dimers.</text>
</comment>
<comment type="similarity">
    <text evidence="1">Belongs to the RNase PH family.</text>
</comment>